<feature type="chain" id="PRO_0000102816" description="Succinate--CoA ligase [ADP-forming] subunit beta">
    <location>
        <begin position="1"/>
        <end position="397"/>
    </location>
</feature>
<feature type="domain" description="ATP-grasp" evidence="1">
    <location>
        <begin position="9"/>
        <end position="254"/>
    </location>
</feature>
<feature type="binding site" evidence="1">
    <location>
        <position position="46"/>
    </location>
    <ligand>
        <name>ATP</name>
        <dbReference type="ChEBI" id="CHEBI:30616"/>
    </ligand>
</feature>
<feature type="binding site" evidence="1">
    <location>
        <begin position="53"/>
        <end position="55"/>
    </location>
    <ligand>
        <name>ATP</name>
        <dbReference type="ChEBI" id="CHEBI:30616"/>
    </ligand>
</feature>
<feature type="binding site" evidence="1">
    <location>
        <position position="109"/>
    </location>
    <ligand>
        <name>ATP</name>
        <dbReference type="ChEBI" id="CHEBI:30616"/>
    </ligand>
</feature>
<feature type="binding site" evidence="1">
    <location>
        <position position="112"/>
    </location>
    <ligand>
        <name>ATP</name>
        <dbReference type="ChEBI" id="CHEBI:30616"/>
    </ligand>
</feature>
<feature type="binding site" evidence="1">
    <location>
        <position position="117"/>
    </location>
    <ligand>
        <name>ATP</name>
        <dbReference type="ChEBI" id="CHEBI:30616"/>
    </ligand>
</feature>
<feature type="binding site" evidence="1">
    <location>
        <position position="209"/>
    </location>
    <ligand>
        <name>Mg(2+)</name>
        <dbReference type="ChEBI" id="CHEBI:18420"/>
    </ligand>
</feature>
<feature type="binding site" evidence="1">
    <location>
        <position position="223"/>
    </location>
    <ligand>
        <name>Mg(2+)</name>
        <dbReference type="ChEBI" id="CHEBI:18420"/>
    </ligand>
</feature>
<feature type="binding site" evidence="1">
    <location>
        <position position="274"/>
    </location>
    <ligand>
        <name>substrate</name>
        <note>ligand shared with subunit alpha</note>
    </ligand>
</feature>
<feature type="binding site" evidence="1">
    <location>
        <begin position="331"/>
        <end position="333"/>
    </location>
    <ligand>
        <name>substrate</name>
        <note>ligand shared with subunit alpha</note>
    </ligand>
</feature>
<accession>Q8UC60</accession>
<proteinExistence type="inferred from homology"/>
<sequence length="397" mass="41899">MNIHEYQAKALLKGYGAPVAEGVAILKVEEAEAAAKQLPGPLYVVKSQIHAGGRGKGKFKELGPDAKGGVRLAKSIEEVVSHSRDMLGNTLVTAQTGDAGKQVNRLYIEDGADIARELYCSLLVDRSVGQVAFVVSTEGGMDIEAVAHDTPEKIHTIAINPEKGVSDADVAAISKALELDGVAAEDAKALFPILYKAFNEKDMALLEVNPLIVMENGHLRVLDAKMSFDGNALFRHEDVKALRDETEEDAKEIEASKWDLAYVALDGNIGCMVNGAGLAMATMDIIKLYGKEPANFCDVGGGAGKEKVAAAFKIITADPKVEGILVNIFGGIMKCDVIAEGVIAAVKEVGLQVPLVVRLEGTNVELGKKLLNESGLAITAADDLDDAAKKIVAAING</sequence>
<dbReference type="EC" id="6.2.1.5" evidence="1"/>
<dbReference type="EMBL" id="AE007869">
    <property type="protein sequence ID" value="AAK88359.1"/>
    <property type="molecule type" value="Genomic_DNA"/>
</dbReference>
<dbReference type="PIR" id="AE2900">
    <property type="entry name" value="AE2900"/>
</dbReference>
<dbReference type="PIR" id="F97675">
    <property type="entry name" value="F97675"/>
</dbReference>
<dbReference type="RefSeq" id="NP_355574.1">
    <property type="nucleotide sequence ID" value="NC_003062.2"/>
</dbReference>
<dbReference type="RefSeq" id="WP_010972454.1">
    <property type="nucleotide sequence ID" value="NC_003062.2"/>
</dbReference>
<dbReference type="SMR" id="Q8UC60"/>
<dbReference type="STRING" id="176299.Atu2638"/>
<dbReference type="EnsemblBacteria" id="AAK88359">
    <property type="protein sequence ID" value="AAK88359"/>
    <property type="gene ID" value="Atu2638"/>
</dbReference>
<dbReference type="GeneID" id="1134676"/>
<dbReference type="KEGG" id="atu:Atu2638"/>
<dbReference type="PATRIC" id="fig|176299.10.peg.2642"/>
<dbReference type="eggNOG" id="COG0045">
    <property type="taxonomic scope" value="Bacteria"/>
</dbReference>
<dbReference type="HOGENOM" id="CLU_037430_0_2_5"/>
<dbReference type="OrthoDB" id="9802602at2"/>
<dbReference type="PhylomeDB" id="Q8UC60"/>
<dbReference type="BioCyc" id="AGRO:ATU2638-MONOMER"/>
<dbReference type="UniPathway" id="UPA00223">
    <property type="reaction ID" value="UER00999"/>
</dbReference>
<dbReference type="Proteomes" id="UP000000813">
    <property type="component" value="Chromosome circular"/>
</dbReference>
<dbReference type="GO" id="GO:0005829">
    <property type="term" value="C:cytosol"/>
    <property type="evidence" value="ECO:0007669"/>
    <property type="project" value="TreeGrafter"/>
</dbReference>
<dbReference type="GO" id="GO:0042709">
    <property type="term" value="C:succinate-CoA ligase complex"/>
    <property type="evidence" value="ECO:0007669"/>
    <property type="project" value="TreeGrafter"/>
</dbReference>
<dbReference type="GO" id="GO:0005524">
    <property type="term" value="F:ATP binding"/>
    <property type="evidence" value="ECO:0007669"/>
    <property type="project" value="UniProtKB-UniRule"/>
</dbReference>
<dbReference type="GO" id="GO:0000287">
    <property type="term" value="F:magnesium ion binding"/>
    <property type="evidence" value="ECO:0007669"/>
    <property type="project" value="UniProtKB-UniRule"/>
</dbReference>
<dbReference type="GO" id="GO:0004775">
    <property type="term" value="F:succinate-CoA ligase (ADP-forming) activity"/>
    <property type="evidence" value="ECO:0007669"/>
    <property type="project" value="UniProtKB-UniRule"/>
</dbReference>
<dbReference type="GO" id="GO:0004776">
    <property type="term" value="F:succinate-CoA ligase (GDP-forming) activity"/>
    <property type="evidence" value="ECO:0007669"/>
    <property type="project" value="RHEA"/>
</dbReference>
<dbReference type="GO" id="GO:0006104">
    <property type="term" value="P:succinyl-CoA metabolic process"/>
    <property type="evidence" value="ECO:0007669"/>
    <property type="project" value="TreeGrafter"/>
</dbReference>
<dbReference type="GO" id="GO:0006099">
    <property type="term" value="P:tricarboxylic acid cycle"/>
    <property type="evidence" value="ECO:0007669"/>
    <property type="project" value="UniProtKB-UniRule"/>
</dbReference>
<dbReference type="FunFam" id="3.30.1490.20:FF:000002">
    <property type="entry name" value="Succinate--CoA ligase [ADP-forming] subunit beta"/>
    <property type="match status" value="1"/>
</dbReference>
<dbReference type="FunFam" id="3.30.470.20:FF:000002">
    <property type="entry name" value="Succinate--CoA ligase [ADP-forming] subunit beta"/>
    <property type="match status" value="1"/>
</dbReference>
<dbReference type="FunFam" id="3.40.50.261:FF:000001">
    <property type="entry name" value="Succinate--CoA ligase [ADP-forming] subunit beta"/>
    <property type="match status" value="1"/>
</dbReference>
<dbReference type="Gene3D" id="3.30.1490.20">
    <property type="entry name" value="ATP-grasp fold, A domain"/>
    <property type="match status" value="1"/>
</dbReference>
<dbReference type="Gene3D" id="3.30.470.20">
    <property type="entry name" value="ATP-grasp fold, B domain"/>
    <property type="match status" value="1"/>
</dbReference>
<dbReference type="Gene3D" id="3.40.50.261">
    <property type="entry name" value="Succinyl-CoA synthetase domains"/>
    <property type="match status" value="1"/>
</dbReference>
<dbReference type="HAMAP" id="MF_00558">
    <property type="entry name" value="Succ_CoA_beta"/>
    <property type="match status" value="1"/>
</dbReference>
<dbReference type="InterPro" id="IPR011761">
    <property type="entry name" value="ATP-grasp"/>
</dbReference>
<dbReference type="InterPro" id="IPR013650">
    <property type="entry name" value="ATP-grasp_succ-CoA_synth-type"/>
</dbReference>
<dbReference type="InterPro" id="IPR013815">
    <property type="entry name" value="ATP_grasp_subdomain_1"/>
</dbReference>
<dbReference type="InterPro" id="IPR017866">
    <property type="entry name" value="Succ-CoA_synthase_bsu_CS"/>
</dbReference>
<dbReference type="InterPro" id="IPR005811">
    <property type="entry name" value="SUCC_ACL_C"/>
</dbReference>
<dbReference type="InterPro" id="IPR005809">
    <property type="entry name" value="Succ_CoA_ligase-like_bsu"/>
</dbReference>
<dbReference type="InterPro" id="IPR016102">
    <property type="entry name" value="Succinyl-CoA_synth-like"/>
</dbReference>
<dbReference type="NCBIfam" id="NF001913">
    <property type="entry name" value="PRK00696.1"/>
    <property type="match status" value="1"/>
</dbReference>
<dbReference type="NCBIfam" id="TIGR01016">
    <property type="entry name" value="sucCoAbeta"/>
    <property type="match status" value="1"/>
</dbReference>
<dbReference type="PANTHER" id="PTHR11815:SF10">
    <property type="entry name" value="SUCCINATE--COA LIGASE [GDP-FORMING] SUBUNIT BETA, MITOCHONDRIAL"/>
    <property type="match status" value="1"/>
</dbReference>
<dbReference type="PANTHER" id="PTHR11815">
    <property type="entry name" value="SUCCINYL-COA SYNTHETASE BETA CHAIN"/>
    <property type="match status" value="1"/>
</dbReference>
<dbReference type="Pfam" id="PF08442">
    <property type="entry name" value="ATP-grasp_2"/>
    <property type="match status" value="1"/>
</dbReference>
<dbReference type="Pfam" id="PF00549">
    <property type="entry name" value="Ligase_CoA"/>
    <property type="match status" value="1"/>
</dbReference>
<dbReference type="PIRSF" id="PIRSF001554">
    <property type="entry name" value="SucCS_beta"/>
    <property type="match status" value="1"/>
</dbReference>
<dbReference type="SUPFAM" id="SSF56059">
    <property type="entry name" value="Glutathione synthetase ATP-binding domain-like"/>
    <property type="match status" value="1"/>
</dbReference>
<dbReference type="SUPFAM" id="SSF52210">
    <property type="entry name" value="Succinyl-CoA synthetase domains"/>
    <property type="match status" value="1"/>
</dbReference>
<dbReference type="PROSITE" id="PS50975">
    <property type="entry name" value="ATP_GRASP"/>
    <property type="match status" value="1"/>
</dbReference>
<dbReference type="PROSITE" id="PS01217">
    <property type="entry name" value="SUCCINYL_COA_LIG_3"/>
    <property type="match status" value="1"/>
</dbReference>
<organism>
    <name type="scientific">Agrobacterium fabrum (strain C58 / ATCC 33970)</name>
    <name type="common">Agrobacterium tumefaciens (strain C58)</name>
    <dbReference type="NCBI Taxonomy" id="176299"/>
    <lineage>
        <taxon>Bacteria</taxon>
        <taxon>Pseudomonadati</taxon>
        <taxon>Pseudomonadota</taxon>
        <taxon>Alphaproteobacteria</taxon>
        <taxon>Hyphomicrobiales</taxon>
        <taxon>Rhizobiaceae</taxon>
        <taxon>Rhizobium/Agrobacterium group</taxon>
        <taxon>Agrobacterium</taxon>
        <taxon>Agrobacterium tumefaciens complex</taxon>
    </lineage>
</organism>
<gene>
    <name evidence="1" type="primary">sucC</name>
    <name type="ordered locus">Atu2638</name>
    <name type="ORF">AGR_C_4780</name>
</gene>
<reference key="1">
    <citation type="journal article" date="2001" name="Science">
        <title>The genome of the natural genetic engineer Agrobacterium tumefaciens C58.</title>
        <authorList>
            <person name="Wood D.W."/>
            <person name="Setubal J.C."/>
            <person name="Kaul R."/>
            <person name="Monks D.E."/>
            <person name="Kitajima J.P."/>
            <person name="Okura V.K."/>
            <person name="Zhou Y."/>
            <person name="Chen L."/>
            <person name="Wood G.E."/>
            <person name="Almeida N.F. Jr."/>
            <person name="Woo L."/>
            <person name="Chen Y."/>
            <person name="Paulsen I.T."/>
            <person name="Eisen J.A."/>
            <person name="Karp P.D."/>
            <person name="Bovee D. Sr."/>
            <person name="Chapman P."/>
            <person name="Clendenning J."/>
            <person name="Deatherage G."/>
            <person name="Gillet W."/>
            <person name="Grant C."/>
            <person name="Kutyavin T."/>
            <person name="Levy R."/>
            <person name="Li M.-J."/>
            <person name="McClelland E."/>
            <person name="Palmieri A."/>
            <person name="Raymond C."/>
            <person name="Rouse G."/>
            <person name="Saenphimmachak C."/>
            <person name="Wu Z."/>
            <person name="Romero P."/>
            <person name="Gordon D."/>
            <person name="Zhang S."/>
            <person name="Yoo H."/>
            <person name="Tao Y."/>
            <person name="Biddle P."/>
            <person name="Jung M."/>
            <person name="Krespan W."/>
            <person name="Perry M."/>
            <person name="Gordon-Kamm B."/>
            <person name="Liao L."/>
            <person name="Kim S."/>
            <person name="Hendrick C."/>
            <person name="Zhao Z.-Y."/>
            <person name="Dolan M."/>
            <person name="Chumley F."/>
            <person name="Tingey S.V."/>
            <person name="Tomb J.-F."/>
            <person name="Gordon M.P."/>
            <person name="Olson M.V."/>
            <person name="Nester E.W."/>
        </authorList>
    </citation>
    <scope>NUCLEOTIDE SEQUENCE [LARGE SCALE GENOMIC DNA]</scope>
    <source>
        <strain>C58 / ATCC 33970</strain>
    </source>
</reference>
<reference key="2">
    <citation type="journal article" date="2001" name="Science">
        <title>Genome sequence of the plant pathogen and biotechnology agent Agrobacterium tumefaciens C58.</title>
        <authorList>
            <person name="Goodner B."/>
            <person name="Hinkle G."/>
            <person name="Gattung S."/>
            <person name="Miller N."/>
            <person name="Blanchard M."/>
            <person name="Qurollo B."/>
            <person name="Goldman B.S."/>
            <person name="Cao Y."/>
            <person name="Askenazi M."/>
            <person name="Halling C."/>
            <person name="Mullin L."/>
            <person name="Houmiel K."/>
            <person name="Gordon J."/>
            <person name="Vaudin M."/>
            <person name="Iartchouk O."/>
            <person name="Epp A."/>
            <person name="Liu F."/>
            <person name="Wollam C."/>
            <person name="Allinger M."/>
            <person name="Doughty D."/>
            <person name="Scott C."/>
            <person name="Lappas C."/>
            <person name="Markelz B."/>
            <person name="Flanagan C."/>
            <person name="Crowell C."/>
            <person name="Gurson J."/>
            <person name="Lomo C."/>
            <person name="Sear C."/>
            <person name="Strub G."/>
            <person name="Cielo C."/>
            <person name="Slater S."/>
        </authorList>
    </citation>
    <scope>NUCLEOTIDE SEQUENCE [LARGE SCALE GENOMIC DNA]</scope>
    <source>
        <strain>C58 / ATCC 33970</strain>
    </source>
</reference>
<protein>
    <recommendedName>
        <fullName evidence="1">Succinate--CoA ligase [ADP-forming] subunit beta</fullName>
        <ecNumber evidence="1">6.2.1.5</ecNumber>
    </recommendedName>
    <alternativeName>
        <fullName evidence="1">Succinyl-CoA synthetase subunit beta</fullName>
        <shortName evidence="1">SCS-beta</shortName>
    </alternativeName>
</protein>
<name>SUCC_AGRFC</name>
<evidence type="ECO:0000255" key="1">
    <source>
        <dbReference type="HAMAP-Rule" id="MF_00558"/>
    </source>
</evidence>
<keyword id="KW-0067">ATP-binding</keyword>
<keyword id="KW-0436">Ligase</keyword>
<keyword id="KW-0460">Magnesium</keyword>
<keyword id="KW-0479">Metal-binding</keyword>
<keyword id="KW-0547">Nucleotide-binding</keyword>
<keyword id="KW-1185">Reference proteome</keyword>
<keyword id="KW-0816">Tricarboxylic acid cycle</keyword>
<comment type="function">
    <text evidence="1">Succinyl-CoA synthetase functions in the citric acid cycle (TCA), coupling the hydrolysis of succinyl-CoA to the synthesis of either ATP or GTP and thus represents the only step of substrate-level phosphorylation in the TCA. The beta subunit provides nucleotide specificity of the enzyme and binds the substrate succinate, while the binding sites for coenzyme A and phosphate are found in the alpha subunit.</text>
</comment>
<comment type="catalytic activity">
    <reaction evidence="1">
        <text>succinate + ATP + CoA = succinyl-CoA + ADP + phosphate</text>
        <dbReference type="Rhea" id="RHEA:17661"/>
        <dbReference type="ChEBI" id="CHEBI:30031"/>
        <dbReference type="ChEBI" id="CHEBI:30616"/>
        <dbReference type="ChEBI" id="CHEBI:43474"/>
        <dbReference type="ChEBI" id="CHEBI:57287"/>
        <dbReference type="ChEBI" id="CHEBI:57292"/>
        <dbReference type="ChEBI" id="CHEBI:456216"/>
        <dbReference type="EC" id="6.2.1.5"/>
    </reaction>
    <physiologicalReaction direction="right-to-left" evidence="1">
        <dbReference type="Rhea" id="RHEA:17663"/>
    </physiologicalReaction>
</comment>
<comment type="catalytic activity">
    <reaction evidence="1">
        <text>GTP + succinate + CoA = succinyl-CoA + GDP + phosphate</text>
        <dbReference type="Rhea" id="RHEA:22120"/>
        <dbReference type="ChEBI" id="CHEBI:30031"/>
        <dbReference type="ChEBI" id="CHEBI:37565"/>
        <dbReference type="ChEBI" id="CHEBI:43474"/>
        <dbReference type="ChEBI" id="CHEBI:57287"/>
        <dbReference type="ChEBI" id="CHEBI:57292"/>
        <dbReference type="ChEBI" id="CHEBI:58189"/>
    </reaction>
    <physiologicalReaction direction="right-to-left" evidence="1">
        <dbReference type="Rhea" id="RHEA:22122"/>
    </physiologicalReaction>
</comment>
<comment type="cofactor">
    <cofactor evidence="1">
        <name>Mg(2+)</name>
        <dbReference type="ChEBI" id="CHEBI:18420"/>
    </cofactor>
    <text evidence="1">Binds 1 Mg(2+) ion per subunit.</text>
</comment>
<comment type="pathway">
    <text evidence="1">Carbohydrate metabolism; tricarboxylic acid cycle; succinate from succinyl-CoA (ligase route): step 1/1.</text>
</comment>
<comment type="subunit">
    <text evidence="1">Heterotetramer of two alpha and two beta subunits.</text>
</comment>
<comment type="similarity">
    <text evidence="1">Belongs to the succinate/malate CoA ligase beta subunit family.</text>
</comment>